<reference key="1">
    <citation type="journal article" date="1992" name="Plant Cell">
        <title>The maize auxotrophic mutant orange pericarp is defective in duplicate genes for tryptophan synthase beta.</title>
        <authorList>
            <person name="Wright A.D."/>
            <person name="Moehlenkamp C.A."/>
            <person name="Perrot G.H."/>
            <person name="Neuffer M.G."/>
            <person name="Cone K.C."/>
        </authorList>
    </citation>
    <scope>NUCLEOTIDE SEQUENCE [MRNA]</scope>
</reference>
<feature type="chain" id="PRO_0000099061" description="Tryptophan synthase beta chain 1">
    <location>
        <begin position="1" status="less than"/>
        <end position="389"/>
    </location>
</feature>
<feature type="modified residue" description="N6-(pyridoxal phosphate)lysine" evidence="1">
    <location>
        <position position="84"/>
    </location>
</feature>
<feature type="non-terminal residue">
    <location>
        <position position="1"/>
    </location>
</feature>
<gene>
    <name type="primary">TSB1</name>
    <name type="synonym">ORP1</name>
</gene>
<evidence type="ECO:0000250" key="1"/>
<evidence type="ECO:0000305" key="2"/>
<dbReference type="EC" id="4.2.1.20"/>
<dbReference type="EMBL" id="M76684">
    <property type="protein sequence ID" value="AAA33490.1"/>
    <property type="molecule type" value="mRNA"/>
</dbReference>
<dbReference type="PIR" id="PQ0449">
    <property type="entry name" value="PQ0449"/>
</dbReference>
<dbReference type="SMR" id="P43283"/>
<dbReference type="STRING" id="4577.P43283"/>
<dbReference type="MaizeGDB" id="15412"/>
<dbReference type="InParanoid" id="P43283"/>
<dbReference type="UniPathway" id="UPA00035">
    <property type="reaction ID" value="UER00044"/>
</dbReference>
<dbReference type="Proteomes" id="UP000007305">
    <property type="component" value="Unplaced"/>
</dbReference>
<dbReference type="ExpressionAtlas" id="P43283">
    <property type="expression patterns" value="baseline and differential"/>
</dbReference>
<dbReference type="GO" id="GO:0009507">
    <property type="term" value="C:chloroplast"/>
    <property type="evidence" value="ECO:0007669"/>
    <property type="project" value="UniProtKB-SubCell"/>
</dbReference>
<dbReference type="GO" id="GO:0005737">
    <property type="term" value="C:cytoplasm"/>
    <property type="evidence" value="ECO:0000318"/>
    <property type="project" value="GO_Central"/>
</dbReference>
<dbReference type="GO" id="GO:0004834">
    <property type="term" value="F:tryptophan synthase activity"/>
    <property type="evidence" value="ECO:0007669"/>
    <property type="project" value="UniProtKB-EC"/>
</dbReference>
<dbReference type="GO" id="GO:0000162">
    <property type="term" value="P:L-tryptophan biosynthetic process"/>
    <property type="evidence" value="ECO:0000318"/>
    <property type="project" value="GO_Central"/>
</dbReference>
<dbReference type="CDD" id="cd06446">
    <property type="entry name" value="Trp-synth_B"/>
    <property type="match status" value="1"/>
</dbReference>
<dbReference type="FunFam" id="3.40.50.1100:FF:000001">
    <property type="entry name" value="Tryptophan synthase beta chain"/>
    <property type="match status" value="1"/>
</dbReference>
<dbReference type="FunFam" id="3.40.50.1100:FF:000004">
    <property type="entry name" value="Tryptophan synthase beta chain"/>
    <property type="match status" value="1"/>
</dbReference>
<dbReference type="Gene3D" id="3.40.50.1100">
    <property type="match status" value="2"/>
</dbReference>
<dbReference type="HAMAP" id="MF_00133">
    <property type="entry name" value="Trp_synth_beta"/>
    <property type="match status" value="1"/>
</dbReference>
<dbReference type="InterPro" id="IPR006653">
    <property type="entry name" value="Trp_synth_b_CS"/>
</dbReference>
<dbReference type="InterPro" id="IPR006654">
    <property type="entry name" value="Trp_synth_beta"/>
</dbReference>
<dbReference type="InterPro" id="IPR023026">
    <property type="entry name" value="Trp_synth_beta/beta-like"/>
</dbReference>
<dbReference type="InterPro" id="IPR001926">
    <property type="entry name" value="TrpB-like_PALP"/>
</dbReference>
<dbReference type="InterPro" id="IPR036052">
    <property type="entry name" value="TrpB-like_PALP_sf"/>
</dbReference>
<dbReference type="NCBIfam" id="TIGR00263">
    <property type="entry name" value="trpB"/>
    <property type="match status" value="1"/>
</dbReference>
<dbReference type="PANTHER" id="PTHR48077:SF3">
    <property type="entry name" value="TRYPTOPHAN SYNTHASE"/>
    <property type="match status" value="1"/>
</dbReference>
<dbReference type="PANTHER" id="PTHR48077">
    <property type="entry name" value="TRYPTOPHAN SYNTHASE-RELATED"/>
    <property type="match status" value="1"/>
</dbReference>
<dbReference type="Pfam" id="PF00291">
    <property type="entry name" value="PALP"/>
    <property type="match status" value="1"/>
</dbReference>
<dbReference type="PIRSF" id="PIRSF001413">
    <property type="entry name" value="Trp_syn_beta"/>
    <property type="match status" value="1"/>
</dbReference>
<dbReference type="SUPFAM" id="SSF53686">
    <property type="entry name" value="Tryptophan synthase beta subunit-like PLP-dependent enzymes"/>
    <property type="match status" value="1"/>
</dbReference>
<dbReference type="PROSITE" id="PS00168">
    <property type="entry name" value="TRP_SYNTHASE_BETA"/>
    <property type="match status" value="1"/>
</dbReference>
<protein>
    <recommendedName>
        <fullName>Tryptophan synthase beta chain 1</fullName>
        <ecNumber>4.2.1.20</ecNumber>
    </recommendedName>
    <alternativeName>
        <fullName>Orange pericarp 1</fullName>
    </alternativeName>
</protein>
<organism>
    <name type="scientific">Zea mays</name>
    <name type="common">Maize</name>
    <dbReference type="NCBI Taxonomy" id="4577"/>
    <lineage>
        <taxon>Eukaryota</taxon>
        <taxon>Viridiplantae</taxon>
        <taxon>Streptophyta</taxon>
        <taxon>Embryophyta</taxon>
        <taxon>Tracheophyta</taxon>
        <taxon>Spermatophyta</taxon>
        <taxon>Magnoliopsida</taxon>
        <taxon>Liliopsida</taxon>
        <taxon>Poales</taxon>
        <taxon>Poaceae</taxon>
        <taxon>PACMAD clade</taxon>
        <taxon>Panicoideae</taxon>
        <taxon>Andropogonodae</taxon>
        <taxon>Andropogoneae</taxon>
        <taxon>Tripsacinae</taxon>
        <taxon>Zea</taxon>
    </lineage>
</organism>
<sequence length="389" mass="42519">GRFGGKYVPETLMHALTELENAFHALATDDEFQKELDGILKDYVGRESPLYFAERLTEHYKRADGTGPLIYLKREDLNHRGAHKINNAVAQALLAKRLGKQRIIAETGAGQHGVATATVCARFGLQCIIYMGAQDMERQALNVFRMKLLGAEVRAVHSGTATLKDATSEAIRDWVTNVETTHYILGSVAGPHPYPMMVREFHKVIGKETRRQAMHKWGGKPDVLVACVGGGSNAMGLFHEFVEDQDVRLIGVEAAGHGVDTDKHAATLTKGQVGVLHGSMSYLLQDDDGQVIEPHSISAGLDYPGVGPEHSFLKDIGRAEYDSVTDQEALDAFKRVSRLEGIIPALETSHALAYLEKLCPTLPDGVRVVLNCSGRGDKDVHTASKYLDV</sequence>
<comment type="function">
    <text>The beta subunit is responsible for the synthesis of L-tryptophan from indole and L-serine.</text>
</comment>
<comment type="catalytic activity">
    <reaction>
        <text>(1S,2R)-1-C-(indol-3-yl)glycerol 3-phosphate + L-serine = D-glyceraldehyde 3-phosphate + L-tryptophan + H2O</text>
        <dbReference type="Rhea" id="RHEA:10532"/>
        <dbReference type="ChEBI" id="CHEBI:15377"/>
        <dbReference type="ChEBI" id="CHEBI:33384"/>
        <dbReference type="ChEBI" id="CHEBI:57912"/>
        <dbReference type="ChEBI" id="CHEBI:58866"/>
        <dbReference type="ChEBI" id="CHEBI:59776"/>
        <dbReference type="EC" id="4.2.1.20"/>
    </reaction>
</comment>
<comment type="cofactor">
    <cofactor>
        <name>pyridoxal 5'-phosphate</name>
        <dbReference type="ChEBI" id="CHEBI:597326"/>
    </cofactor>
</comment>
<comment type="pathway">
    <text>Amino-acid biosynthesis; L-tryptophan biosynthesis; L-tryptophan from chorismate: step 5/5.</text>
</comment>
<comment type="subunit">
    <text>Tetramer of two alpha and two beta chains.</text>
</comment>
<comment type="subcellular location">
    <subcellularLocation>
        <location evidence="2">Plastid</location>
        <location evidence="2">Chloroplast</location>
    </subcellularLocation>
</comment>
<comment type="similarity">
    <text evidence="2">Belongs to the TrpB family.</text>
</comment>
<name>TRPB1_MAIZE</name>
<accession>P43283</accession>
<proteinExistence type="evidence at transcript level"/>
<keyword id="KW-0028">Amino-acid biosynthesis</keyword>
<keyword id="KW-0057">Aromatic amino acid biosynthesis</keyword>
<keyword id="KW-0150">Chloroplast</keyword>
<keyword id="KW-0456">Lyase</keyword>
<keyword id="KW-0934">Plastid</keyword>
<keyword id="KW-0663">Pyridoxal phosphate</keyword>
<keyword id="KW-1185">Reference proteome</keyword>
<keyword id="KW-0822">Tryptophan biosynthesis</keyword>